<organism>
    <name type="scientific">Shigella dysenteriae serotype 1 (strain Sd197)</name>
    <dbReference type="NCBI Taxonomy" id="300267"/>
    <lineage>
        <taxon>Bacteria</taxon>
        <taxon>Pseudomonadati</taxon>
        <taxon>Pseudomonadota</taxon>
        <taxon>Gammaproteobacteria</taxon>
        <taxon>Enterobacterales</taxon>
        <taxon>Enterobacteriaceae</taxon>
        <taxon>Shigella</taxon>
    </lineage>
</organism>
<dbReference type="EC" id="3.2.1.23" evidence="1"/>
<dbReference type="EMBL" id="CP000034">
    <property type="protein sequence ID" value="ABB60591.1"/>
    <property type="status" value="ALT_INIT"/>
    <property type="molecule type" value="Genomic_DNA"/>
</dbReference>
<dbReference type="SMR" id="Q32JB6"/>
<dbReference type="STRING" id="300267.SDY_0378"/>
<dbReference type="CAZy" id="GH2">
    <property type="family name" value="Glycoside Hydrolase Family 2"/>
</dbReference>
<dbReference type="EnsemblBacteria" id="ABB60591">
    <property type="protein sequence ID" value="ABB60591"/>
    <property type="gene ID" value="SDY_0378"/>
</dbReference>
<dbReference type="KEGG" id="sdy:SDY_0378"/>
<dbReference type="HOGENOM" id="CLU_002346_0_2_6"/>
<dbReference type="Proteomes" id="UP000002716">
    <property type="component" value="Chromosome"/>
</dbReference>
<dbReference type="GO" id="GO:0009341">
    <property type="term" value="C:beta-galactosidase complex"/>
    <property type="evidence" value="ECO:0007669"/>
    <property type="project" value="InterPro"/>
</dbReference>
<dbReference type="GO" id="GO:0004565">
    <property type="term" value="F:beta-galactosidase activity"/>
    <property type="evidence" value="ECO:0007669"/>
    <property type="project" value="UniProtKB-EC"/>
</dbReference>
<dbReference type="GO" id="GO:0030246">
    <property type="term" value="F:carbohydrate binding"/>
    <property type="evidence" value="ECO:0007669"/>
    <property type="project" value="InterPro"/>
</dbReference>
<dbReference type="GO" id="GO:0000287">
    <property type="term" value="F:magnesium ion binding"/>
    <property type="evidence" value="ECO:0007669"/>
    <property type="project" value="UniProtKB-UniRule"/>
</dbReference>
<dbReference type="GO" id="GO:0005990">
    <property type="term" value="P:lactose catabolic process"/>
    <property type="evidence" value="ECO:0007669"/>
    <property type="project" value="TreeGrafter"/>
</dbReference>
<dbReference type="FunFam" id="2.60.120.260:FF:000058">
    <property type="entry name" value="Beta-galactosidase"/>
    <property type="match status" value="1"/>
</dbReference>
<dbReference type="FunFam" id="2.60.40.10:FF:000680">
    <property type="entry name" value="Beta-galactosidase"/>
    <property type="match status" value="1"/>
</dbReference>
<dbReference type="FunFam" id="2.60.40.10:FF:000850">
    <property type="entry name" value="Beta-galactosidase"/>
    <property type="match status" value="1"/>
</dbReference>
<dbReference type="FunFam" id="2.70.98.10:FF:000006">
    <property type="entry name" value="Beta-galactosidase"/>
    <property type="match status" value="1"/>
</dbReference>
<dbReference type="FunFam" id="3.20.20.80:FF:000018">
    <property type="entry name" value="Beta-galactosidase"/>
    <property type="match status" value="1"/>
</dbReference>
<dbReference type="Gene3D" id="2.70.98.10">
    <property type="match status" value="1"/>
</dbReference>
<dbReference type="Gene3D" id="2.60.120.260">
    <property type="entry name" value="Galactose-binding domain-like"/>
    <property type="match status" value="1"/>
</dbReference>
<dbReference type="Gene3D" id="3.20.20.80">
    <property type="entry name" value="Glycosidases"/>
    <property type="match status" value="1"/>
</dbReference>
<dbReference type="Gene3D" id="2.60.40.10">
    <property type="entry name" value="Immunoglobulins"/>
    <property type="match status" value="2"/>
</dbReference>
<dbReference type="HAMAP" id="MF_01687">
    <property type="entry name" value="Beta_gal"/>
    <property type="match status" value="1"/>
</dbReference>
<dbReference type="InterPro" id="IPR004199">
    <property type="entry name" value="B-gal_small/dom_5"/>
</dbReference>
<dbReference type="InterPro" id="IPR050347">
    <property type="entry name" value="Bact_Beta-galactosidase"/>
</dbReference>
<dbReference type="InterPro" id="IPR036156">
    <property type="entry name" value="Beta-gal/glucu_dom_sf"/>
</dbReference>
<dbReference type="InterPro" id="IPR011013">
    <property type="entry name" value="Gal_mutarotase_sf_dom"/>
</dbReference>
<dbReference type="InterPro" id="IPR008979">
    <property type="entry name" value="Galactose-bd-like_sf"/>
</dbReference>
<dbReference type="InterPro" id="IPR014718">
    <property type="entry name" value="GH-type_carb-bd"/>
</dbReference>
<dbReference type="InterPro" id="IPR006101">
    <property type="entry name" value="Glyco_hydro_2"/>
</dbReference>
<dbReference type="InterPro" id="IPR023232">
    <property type="entry name" value="Glyco_hydro_2_AS"/>
</dbReference>
<dbReference type="InterPro" id="IPR023933">
    <property type="entry name" value="Glyco_hydro_2_beta_Galsidase"/>
</dbReference>
<dbReference type="InterPro" id="IPR006103">
    <property type="entry name" value="Glyco_hydro_2_cat"/>
</dbReference>
<dbReference type="InterPro" id="IPR023230">
    <property type="entry name" value="Glyco_hydro_2_CS"/>
</dbReference>
<dbReference type="InterPro" id="IPR006102">
    <property type="entry name" value="Glyco_hydro_2_Ig-like"/>
</dbReference>
<dbReference type="InterPro" id="IPR006104">
    <property type="entry name" value="Glyco_hydro_2_N"/>
</dbReference>
<dbReference type="InterPro" id="IPR017853">
    <property type="entry name" value="Glycoside_hydrolase_SF"/>
</dbReference>
<dbReference type="InterPro" id="IPR013783">
    <property type="entry name" value="Ig-like_fold"/>
</dbReference>
<dbReference type="InterPro" id="IPR032312">
    <property type="entry name" value="LacZ_4"/>
</dbReference>
<dbReference type="NCBIfam" id="NF007074">
    <property type="entry name" value="PRK09525.1"/>
    <property type="match status" value="1"/>
</dbReference>
<dbReference type="PANTHER" id="PTHR46323">
    <property type="entry name" value="BETA-GALACTOSIDASE"/>
    <property type="match status" value="1"/>
</dbReference>
<dbReference type="PANTHER" id="PTHR46323:SF2">
    <property type="entry name" value="BETA-GALACTOSIDASE"/>
    <property type="match status" value="1"/>
</dbReference>
<dbReference type="Pfam" id="PF02929">
    <property type="entry name" value="Bgal_small_N"/>
    <property type="match status" value="1"/>
</dbReference>
<dbReference type="Pfam" id="PF00703">
    <property type="entry name" value="Glyco_hydro_2"/>
    <property type="match status" value="1"/>
</dbReference>
<dbReference type="Pfam" id="PF02836">
    <property type="entry name" value="Glyco_hydro_2_C"/>
    <property type="match status" value="1"/>
</dbReference>
<dbReference type="Pfam" id="PF02837">
    <property type="entry name" value="Glyco_hydro_2_N"/>
    <property type="match status" value="1"/>
</dbReference>
<dbReference type="Pfam" id="PF16353">
    <property type="entry name" value="LacZ_4"/>
    <property type="match status" value="1"/>
</dbReference>
<dbReference type="PRINTS" id="PR00132">
    <property type="entry name" value="GLHYDRLASE2"/>
</dbReference>
<dbReference type="SMART" id="SM01038">
    <property type="entry name" value="Bgal_small_N"/>
    <property type="match status" value="1"/>
</dbReference>
<dbReference type="SUPFAM" id="SSF51445">
    <property type="entry name" value="(Trans)glycosidases"/>
    <property type="match status" value="1"/>
</dbReference>
<dbReference type="SUPFAM" id="SSF49303">
    <property type="entry name" value="beta-Galactosidase/glucuronidase domain"/>
    <property type="match status" value="2"/>
</dbReference>
<dbReference type="SUPFAM" id="SSF74650">
    <property type="entry name" value="Galactose mutarotase-like"/>
    <property type="match status" value="1"/>
</dbReference>
<dbReference type="SUPFAM" id="SSF49785">
    <property type="entry name" value="Galactose-binding domain-like"/>
    <property type="match status" value="1"/>
</dbReference>
<dbReference type="PROSITE" id="PS00719">
    <property type="entry name" value="GLYCOSYL_HYDROL_F2_1"/>
    <property type="match status" value="1"/>
</dbReference>
<dbReference type="PROSITE" id="PS00608">
    <property type="entry name" value="GLYCOSYL_HYDROL_F2_2"/>
    <property type="match status" value="1"/>
</dbReference>
<gene>
    <name evidence="1" type="primary">lacZ</name>
    <name type="ordered locus">SDY_0378</name>
</gene>
<feature type="chain" id="PRO_0000367009" description="Beta-galactosidase">
    <location>
        <begin position="1"/>
        <end position="1024"/>
    </location>
</feature>
<feature type="active site" description="Proton donor" evidence="1">
    <location>
        <position position="462"/>
    </location>
</feature>
<feature type="active site" description="Nucleophile" evidence="1">
    <location>
        <position position="538"/>
    </location>
</feature>
<feature type="binding site" evidence="1">
    <location>
        <position position="103"/>
    </location>
    <ligand>
        <name>substrate</name>
    </ligand>
</feature>
<feature type="binding site" evidence="1">
    <location>
        <position position="202"/>
    </location>
    <ligand>
        <name>Na(+)</name>
        <dbReference type="ChEBI" id="CHEBI:29101"/>
    </ligand>
</feature>
<feature type="binding site" evidence="1">
    <location>
        <position position="202"/>
    </location>
    <ligand>
        <name>substrate</name>
    </ligand>
</feature>
<feature type="binding site" evidence="1">
    <location>
        <position position="417"/>
    </location>
    <ligand>
        <name>Mg(2+)</name>
        <dbReference type="ChEBI" id="CHEBI:18420"/>
        <label>1</label>
    </ligand>
</feature>
<feature type="binding site" evidence="1">
    <location>
        <position position="419"/>
    </location>
    <ligand>
        <name>Mg(2+)</name>
        <dbReference type="ChEBI" id="CHEBI:18420"/>
        <label>1</label>
    </ligand>
</feature>
<feature type="binding site" evidence="1">
    <location>
        <position position="462"/>
    </location>
    <ligand>
        <name>Mg(2+)</name>
        <dbReference type="ChEBI" id="CHEBI:18420"/>
        <label>1</label>
    </ligand>
</feature>
<feature type="binding site" evidence="1">
    <location>
        <position position="462"/>
    </location>
    <ligand>
        <name>substrate</name>
    </ligand>
</feature>
<feature type="binding site" evidence="1">
    <location>
        <begin position="538"/>
        <end position="541"/>
    </location>
    <ligand>
        <name>substrate</name>
    </ligand>
</feature>
<feature type="binding site" evidence="1">
    <location>
        <position position="598"/>
    </location>
    <ligand>
        <name>Mg(2+)</name>
        <dbReference type="ChEBI" id="CHEBI:18420"/>
        <label>2</label>
    </ligand>
</feature>
<feature type="binding site" evidence="1">
    <location>
        <position position="602"/>
    </location>
    <ligand>
        <name>Na(+)</name>
        <dbReference type="ChEBI" id="CHEBI:29101"/>
    </ligand>
</feature>
<feature type="binding site" evidence="1">
    <location>
        <position position="605"/>
    </location>
    <ligand>
        <name>Na(+)</name>
        <dbReference type="ChEBI" id="CHEBI:29101"/>
    </ligand>
</feature>
<feature type="binding site" evidence="1">
    <location>
        <position position="605"/>
    </location>
    <ligand>
        <name>substrate</name>
    </ligand>
</feature>
<feature type="binding site" evidence="1">
    <location>
        <position position="1000"/>
    </location>
    <ligand>
        <name>substrate</name>
    </ligand>
</feature>
<feature type="site" description="Transition state stabilizer" evidence="1">
    <location>
        <position position="358"/>
    </location>
</feature>
<feature type="site" description="Transition state stabilizer" evidence="1">
    <location>
        <position position="392"/>
    </location>
</feature>
<reference key="1">
    <citation type="journal article" date="2005" name="Nucleic Acids Res.">
        <title>Genome dynamics and diversity of Shigella species, the etiologic agents of bacillary dysentery.</title>
        <authorList>
            <person name="Yang F."/>
            <person name="Yang J."/>
            <person name="Zhang X."/>
            <person name="Chen L."/>
            <person name="Jiang Y."/>
            <person name="Yan Y."/>
            <person name="Tang X."/>
            <person name="Wang J."/>
            <person name="Xiong Z."/>
            <person name="Dong J."/>
            <person name="Xue Y."/>
            <person name="Zhu Y."/>
            <person name="Xu X."/>
            <person name="Sun L."/>
            <person name="Chen S."/>
            <person name="Nie H."/>
            <person name="Peng J."/>
            <person name="Xu J."/>
            <person name="Wang Y."/>
            <person name="Yuan Z."/>
            <person name="Wen Y."/>
            <person name="Yao Z."/>
            <person name="Shen Y."/>
            <person name="Qiang B."/>
            <person name="Hou Y."/>
            <person name="Yu J."/>
            <person name="Jin Q."/>
        </authorList>
    </citation>
    <scope>NUCLEOTIDE SEQUENCE [LARGE SCALE GENOMIC DNA]</scope>
    <source>
        <strain>Sd197</strain>
    </source>
</reference>
<sequence length="1024" mass="116614">MTMITDSLAVVLQRRDWENPGVTQLNRLAAHPPFASWRNSEEARTNRPSQQLRSLNGEWQFVWFPAPEAVPESWLECDLPVADTVVVPSNWQMHGYDAPIYTNVTYPITVNPPFVPTENPTGYYSLTFNVDESWLQEGQTRIIFDGVNSAFHLWCNGRWVGYGQDSRLPSEFDLSAFLRAGENRLAVMVLRWSDGSYLEDQDMWRMSGIFRDVSLLHKPTTQIRDFHVATRFNDDFSRAVLEAEVQMYGELRDELRVTVSLWQGETQVASGTAPFGGEIIHERGGYADRVTLGLNVENPKLWSAEIPNIYRAVVELHTADGTLIEAEACDVGFREVRIENGLLLLNGKPLLIRGVNRHEHHPLHGQVMDEQTMVQDILLMKQNNFNAVRCSHYPNHPLWYTLCDRYGLYVVDEANIETHGMVPMNRLTDDPRWLPAMSERVTRMVQRDRNHPSVIIWSLGNESGHGANHDALYRWIKSVDPSRPVQYEGGGADTSATDIICPMYARVDEDQLFPAVPKWSIKKWLSLPGETRPLILCEYAHAMGNSLGGFAKYWQAFRQYPRLQGGFVWDWVDQSLIKYDENGNPWSAYGGDFGDTPNDRQFCMNGLVFADRTPHPALTEAKHQQQFFQFRLSGRTIEVTSEYLFRQSDNELLHWTVALDGKPLASSEVPMNVAPQGKQVIELPELPRLESTGQLWLTVHVVQPNATAWSEAGHISAWQQWRLAANLSVTLPSAPHAIPQLTTSETDFCIELDNKRWQFNRQSGFLSQMWIGDEKQLLTPLRDQFTRAPLDNDIGVSEATRIDPNAWVERWKAAGHYQAEAALLQCTADTLADAVLITTAHTWQHQGKTLFISRKTYRIDGSGQMAITVDVEVASDTPHPARIGLTCQLAQVAERVNWLGLGPQENYPDRLTAACFDRWDLPLSDMYTPYVFPSENGLRCGTRELNYGPHQWRGDFQFNISRYSQQQLMETSHRHLLHAEEGTWLNIDGFHMGIGGDDSWSPSVSAEFQLSAGRYHYQLVWCQK</sequence>
<evidence type="ECO:0000255" key="1">
    <source>
        <dbReference type="HAMAP-Rule" id="MF_01687"/>
    </source>
</evidence>
<evidence type="ECO:0000305" key="2"/>
<protein>
    <recommendedName>
        <fullName evidence="1">Beta-galactosidase</fullName>
        <shortName evidence="1">Beta-gal</shortName>
        <ecNumber evidence="1">3.2.1.23</ecNumber>
    </recommendedName>
    <alternativeName>
        <fullName evidence="1">Lactase</fullName>
    </alternativeName>
</protein>
<accession>Q32JB6</accession>
<comment type="catalytic activity">
    <reaction evidence="1">
        <text>Hydrolysis of terminal non-reducing beta-D-galactose residues in beta-D-galactosides.</text>
        <dbReference type="EC" id="3.2.1.23"/>
    </reaction>
</comment>
<comment type="cofactor">
    <cofactor evidence="1">
        <name>Mg(2+)</name>
        <dbReference type="ChEBI" id="CHEBI:18420"/>
    </cofactor>
    <text evidence="1">Binds 2 magnesium ions per monomer.</text>
</comment>
<comment type="cofactor">
    <cofactor evidence="1">
        <name>Na(+)</name>
        <dbReference type="ChEBI" id="CHEBI:29101"/>
    </cofactor>
    <text evidence="1">Binds 1 sodium ion per monomer.</text>
</comment>
<comment type="subunit">
    <text evidence="1">Homotetramer.</text>
</comment>
<comment type="similarity">
    <text evidence="1">Belongs to the glycosyl hydrolase 2 family.</text>
</comment>
<comment type="sequence caution" evidence="2">
    <conflict type="erroneous initiation">
        <sequence resource="EMBL-CDS" id="ABB60591"/>
    </conflict>
</comment>
<name>BGAL_SHIDS</name>
<proteinExistence type="inferred from homology"/>
<keyword id="KW-0326">Glycosidase</keyword>
<keyword id="KW-0378">Hydrolase</keyword>
<keyword id="KW-0460">Magnesium</keyword>
<keyword id="KW-0479">Metal-binding</keyword>
<keyword id="KW-1185">Reference proteome</keyword>
<keyword id="KW-0915">Sodium</keyword>